<keyword id="KW-0066">ATP synthesis</keyword>
<keyword id="KW-0997">Cell inner membrane</keyword>
<keyword id="KW-1003">Cell membrane</keyword>
<keyword id="KW-0139">CF(1)</keyword>
<keyword id="KW-0375">Hydrogen ion transport</keyword>
<keyword id="KW-0406">Ion transport</keyword>
<keyword id="KW-0472">Membrane</keyword>
<keyword id="KW-0813">Transport</keyword>
<evidence type="ECO:0000255" key="1">
    <source>
        <dbReference type="HAMAP-Rule" id="MF_00530"/>
    </source>
</evidence>
<gene>
    <name evidence="1" type="primary">atpC</name>
    <name type="ordered locus">BQ12220</name>
</gene>
<feature type="chain" id="PRO_0000188103" description="ATP synthase epsilon chain">
    <location>
        <begin position="1"/>
        <end position="138"/>
    </location>
</feature>
<protein>
    <recommendedName>
        <fullName evidence="1">ATP synthase epsilon chain</fullName>
    </recommendedName>
    <alternativeName>
        <fullName evidence="1">ATP synthase F1 sector epsilon subunit</fullName>
    </alternativeName>
    <alternativeName>
        <fullName evidence="1">F-ATPase epsilon subunit</fullName>
    </alternativeName>
</protein>
<dbReference type="EMBL" id="BX897700">
    <property type="protein sequence ID" value="CAF26681.1"/>
    <property type="molecule type" value="Genomic_DNA"/>
</dbReference>
<dbReference type="SMR" id="Q6FYM4"/>
<dbReference type="KEGG" id="bqu:BQ12220"/>
<dbReference type="eggNOG" id="COG0355">
    <property type="taxonomic scope" value="Bacteria"/>
</dbReference>
<dbReference type="HOGENOM" id="CLU_084338_2_1_5"/>
<dbReference type="Proteomes" id="UP000000597">
    <property type="component" value="Chromosome"/>
</dbReference>
<dbReference type="GO" id="GO:0005886">
    <property type="term" value="C:plasma membrane"/>
    <property type="evidence" value="ECO:0007669"/>
    <property type="project" value="UniProtKB-SubCell"/>
</dbReference>
<dbReference type="GO" id="GO:0045259">
    <property type="term" value="C:proton-transporting ATP synthase complex"/>
    <property type="evidence" value="ECO:0007669"/>
    <property type="project" value="UniProtKB-KW"/>
</dbReference>
<dbReference type="GO" id="GO:0005524">
    <property type="term" value="F:ATP binding"/>
    <property type="evidence" value="ECO:0007669"/>
    <property type="project" value="UniProtKB-UniRule"/>
</dbReference>
<dbReference type="GO" id="GO:0046933">
    <property type="term" value="F:proton-transporting ATP synthase activity, rotational mechanism"/>
    <property type="evidence" value="ECO:0007669"/>
    <property type="project" value="UniProtKB-UniRule"/>
</dbReference>
<dbReference type="CDD" id="cd12152">
    <property type="entry name" value="F1-ATPase_delta"/>
    <property type="match status" value="1"/>
</dbReference>
<dbReference type="Gene3D" id="2.60.15.10">
    <property type="entry name" value="F0F1 ATP synthase delta/epsilon subunit, N-terminal"/>
    <property type="match status" value="1"/>
</dbReference>
<dbReference type="HAMAP" id="MF_00530">
    <property type="entry name" value="ATP_synth_epsil_bac"/>
    <property type="match status" value="1"/>
</dbReference>
<dbReference type="InterPro" id="IPR001469">
    <property type="entry name" value="ATP_synth_F1_dsu/esu"/>
</dbReference>
<dbReference type="InterPro" id="IPR020546">
    <property type="entry name" value="ATP_synth_F1_dsu/esu_N"/>
</dbReference>
<dbReference type="InterPro" id="IPR036771">
    <property type="entry name" value="ATPsynth_dsu/esu_N"/>
</dbReference>
<dbReference type="Pfam" id="PF02823">
    <property type="entry name" value="ATP-synt_DE_N"/>
    <property type="match status" value="1"/>
</dbReference>
<dbReference type="SUPFAM" id="SSF51344">
    <property type="entry name" value="Epsilon subunit of F1F0-ATP synthase N-terminal domain"/>
    <property type="match status" value="1"/>
</dbReference>
<accession>Q6FYM4</accession>
<sequence length="138" mass="14972">MENKRVEHFLFELVSPEKLVFSEQVISVVIPSASGALTVMAHHEPLVASIVLGSVRVLTSSGEKLFAVCRGVANITSSGCSLLVEKVVAVEHLSFDVLEQQISQVRATLEGDSDDRISHKVQDFFHQLTNADGVLTEA</sequence>
<organism>
    <name type="scientific">Bartonella quintana (strain Toulouse)</name>
    <name type="common">Rochalimaea quintana</name>
    <dbReference type="NCBI Taxonomy" id="283165"/>
    <lineage>
        <taxon>Bacteria</taxon>
        <taxon>Pseudomonadati</taxon>
        <taxon>Pseudomonadota</taxon>
        <taxon>Alphaproteobacteria</taxon>
        <taxon>Hyphomicrobiales</taxon>
        <taxon>Bartonellaceae</taxon>
        <taxon>Bartonella</taxon>
    </lineage>
</organism>
<comment type="function">
    <text evidence="1">Produces ATP from ADP in the presence of a proton gradient across the membrane.</text>
</comment>
<comment type="subunit">
    <text>F-type ATPases have 2 components, CF(1) - the catalytic core - and CF(0) - the membrane proton channel. CF(1) has five subunits: alpha(3), beta(3), gamma(1), delta(1), epsilon(1). CF(0) has three main subunits: a, b and c.</text>
</comment>
<comment type="subcellular location">
    <subcellularLocation>
        <location evidence="1">Cell inner membrane</location>
        <topology evidence="1">Peripheral membrane protein</topology>
    </subcellularLocation>
</comment>
<comment type="similarity">
    <text evidence="1">Belongs to the ATPase epsilon chain family.</text>
</comment>
<name>ATPE_BARQU</name>
<reference key="1">
    <citation type="journal article" date="2004" name="Proc. Natl. Acad. Sci. U.S.A.">
        <title>The louse-borne human pathogen Bartonella quintana is a genomic derivative of the zoonotic agent Bartonella henselae.</title>
        <authorList>
            <person name="Alsmark U.C.M."/>
            <person name="Frank A.C."/>
            <person name="Karlberg E.O."/>
            <person name="Legault B.-A."/>
            <person name="Ardell D.H."/>
            <person name="Canbaeck B."/>
            <person name="Eriksson A.-S."/>
            <person name="Naeslund A.K."/>
            <person name="Handley S.A."/>
            <person name="Huvet M."/>
            <person name="La Scola B."/>
            <person name="Holmberg M."/>
            <person name="Andersson S.G.E."/>
        </authorList>
    </citation>
    <scope>NUCLEOTIDE SEQUENCE [LARGE SCALE GENOMIC DNA]</scope>
    <source>
        <strain>Toulouse</strain>
    </source>
</reference>
<proteinExistence type="inferred from homology"/>